<dbReference type="EMBL" id="AE014291">
    <property type="protein sequence ID" value="AAN29216.1"/>
    <property type="molecule type" value="Genomic_DNA"/>
</dbReference>
<dbReference type="EMBL" id="CP002997">
    <property type="protein sequence ID" value="AEM17629.1"/>
    <property type="molecule type" value="Genomic_DNA"/>
</dbReference>
<dbReference type="RefSeq" id="WP_004689446.1">
    <property type="nucleotide sequence ID" value="NZ_KN046804.1"/>
</dbReference>
<dbReference type="SMR" id="Q8G2Q1"/>
<dbReference type="KEGG" id="bms:BR0267"/>
<dbReference type="KEGG" id="bsi:BS1330_I0268"/>
<dbReference type="PATRIC" id="fig|204722.21.peg.1749"/>
<dbReference type="HOGENOM" id="CLU_056339_2_0_5"/>
<dbReference type="PhylomeDB" id="Q8G2Q1"/>
<dbReference type="Proteomes" id="UP000007104">
    <property type="component" value="Chromosome I"/>
</dbReference>
<dbReference type="GO" id="GO:0005737">
    <property type="term" value="C:cytoplasm"/>
    <property type="evidence" value="ECO:0007669"/>
    <property type="project" value="UniProtKB-SubCell"/>
</dbReference>
<dbReference type="GO" id="GO:0016151">
    <property type="term" value="F:nickel cation binding"/>
    <property type="evidence" value="ECO:0007669"/>
    <property type="project" value="UniProtKB-UniRule"/>
</dbReference>
<dbReference type="HAMAP" id="MF_01384">
    <property type="entry name" value="UreD"/>
    <property type="match status" value="1"/>
</dbReference>
<dbReference type="InterPro" id="IPR002669">
    <property type="entry name" value="UreD"/>
</dbReference>
<dbReference type="PANTHER" id="PTHR33643">
    <property type="entry name" value="UREASE ACCESSORY PROTEIN D"/>
    <property type="match status" value="1"/>
</dbReference>
<dbReference type="PANTHER" id="PTHR33643:SF1">
    <property type="entry name" value="UREASE ACCESSORY PROTEIN D"/>
    <property type="match status" value="1"/>
</dbReference>
<dbReference type="Pfam" id="PF01774">
    <property type="entry name" value="UreD"/>
    <property type="match status" value="1"/>
</dbReference>
<gene>
    <name evidence="1" type="primary">ureD1</name>
    <name type="synonym">ureD-1</name>
    <name type="ordered locus">BR0267</name>
    <name type="ordered locus">BS1330_I0268</name>
</gene>
<comment type="function">
    <text evidence="1">Required for maturation of urease via the functional incorporation of the urease nickel metallocenter.</text>
</comment>
<comment type="function">
    <text evidence="2">Disrupting the ure1 operon causes loss of urease activity, decreased resistance to low pH killing in vitro and decreased pathogen survival when inoculated in BALB/c mice by gavage.</text>
</comment>
<comment type="subunit">
    <text evidence="1">UreD, UreF and UreG form a complex that acts as a GTP-hydrolysis-dependent molecular chaperone, activating the urease apoprotein by helping to assemble the nickel containing metallocenter of UreC. The UreE protein probably delivers the nickel.</text>
</comment>
<comment type="subcellular location">
    <subcellularLocation>
        <location evidence="1">Cytoplasm</location>
    </subcellularLocation>
</comment>
<comment type="similarity">
    <text evidence="1">Belongs to the UreD family.</text>
</comment>
<name>URED1_BRUSU</name>
<keyword id="KW-0143">Chaperone</keyword>
<keyword id="KW-0963">Cytoplasm</keyword>
<keyword id="KW-0996">Nickel insertion</keyword>
<keyword id="KW-0843">Virulence</keyword>
<feature type="chain" id="PRO_0000340427" description="Urease accessory protein UreD 1">
    <location>
        <begin position="1"/>
        <end position="280"/>
    </location>
</feature>
<sequence>MLIINDNNLSGLSLQRVNGTGELSVQFKDGRSRISRLYQEGAAKIRMPQAVTGPLEAILINTSGGLTGGDRLKWDVALDDGASAVITTQACERIYRSGGGEARIATRLKAAKGTRLAWLPQETILFNRSILSRRLDVELEEGAQMLVVEATVFGRLAMGERVVAARFADRWRVRLGGRVIHAEEFRLGPDVGAELQAPAVAGGACAMATVLMVCEQAGRHLETARAIIGEEGGCSLWRVGKASKLVVRLYAPDSYALRRRLCPLVALLNGKAGLPKVWTI</sequence>
<evidence type="ECO:0000255" key="1">
    <source>
        <dbReference type="HAMAP-Rule" id="MF_01384"/>
    </source>
</evidence>
<evidence type="ECO:0000269" key="2">
    <source>
    </source>
</evidence>
<proteinExistence type="inferred from homology"/>
<protein>
    <recommendedName>
        <fullName evidence="1">Urease accessory protein UreD 1</fullName>
    </recommendedName>
</protein>
<reference key="1">
    <citation type="journal article" date="2002" name="Proc. Natl. Acad. Sci. U.S.A.">
        <title>The Brucella suis genome reveals fundamental similarities between animal and plant pathogens and symbionts.</title>
        <authorList>
            <person name="Paulsen I.T."/>
            <person name="Seshadri R."/>
            <person name="Nelson K.E."/>
            <person name="Eisen J.A."/>
            <person name="Heidelberg J.F."/>
            <person name="Read T.D."/>
            <person name="Dodson R.J."/>
            <person name="Umayam L.A."/>
            <person name="Brinkac L.M."/>
            <person name="Beanan M.J."/>
            <person name="Daugherty S.C."/>
            <person name="DeBoy R.T."/>
            <person name="Durkin A.S."/>
            <person name="Kolonay J.F."/>
            <person name="Madupu R."/>
            <person name="Nelson W.C."/>
            <person name="Ayodeji B."/>
            <person name="Kraul M."/>
            <person name="Shetty J."/>
            <person name="Malek J.A."/>
            <person name="Van Aken S.E."/>
            <person name="Riedmuller S."/>
            <person name="Tettelin H."/>
            <person name="Gill S.R."/>
            <person name="White O."/>
            <person name="Salzberg S.L."/>
            <person name="Hoover D.L."/>
            <person name="Lindler L.E."/>
            <person name="Halling S.M."/>
            <person name="Boyle S.M."/>
            <person name="Fraser C.M."/>
        </authorList>
    </citation>
    <scope>NUCLEOTIDE SEQUENCE [LARGE SCALE GENOMIC DNA]</scope>
    <source>
        <strain>1330</strain>
    </source>
</reference>
<reference key="2">
    <citation type="journal article" date="2011" name="J. Bacteriol.">
        <title>Revised genome sequence of Brucella suis 1330.</title>
        <authorList>
            <person name="Tae H."/>
            <person name="Shallom S."/>
            <person name="Settlage R."/>
            <person name="Preston D."/>
            <person name="Adams L.G."/>
            <person name="Garner H.R."/>
        </authorList>
    </citation>
    <scope>NUCLEOTIDE SEQUENCE [LARGE SCALE GENOMIC DNA]</scope>
    <source>
        <strain>1330</strain>
    </source>
</reference>
<reference key="3">
    <citation type="journal article" date="2007" name="BMC Microbiol.">
        <title>Brucella suis urease encoded by ure1 but not ure2 is necessary for intestinal infection of BALB/c mice.</title>
        <authorList>
            <person name="Bandara A.B."/>
            <person name="Contreras A."/>
            <person name="Contreras-Rodriguez A."/>
            <person name="Martins A.M."/>
            <person name="Dobrean V."/>
            <person name="Poff-Reichow S."/>
            <person name="Rajasekaran P."/>
            <person name="Sriranganathan N."/>
            <person name="Schurig G.G."/>
            <person name="Boyle S.M."/>
        </authorList>
    </citation>
    <scope>OPERON DISRUPTION</scope>
    <scope>ROLE IN VIRULENCE</scope>
    <source>
        <strain>1330</strain>
    </source>
</reference>
<accession>Q8G2Q1</accession>
<accession>G0KBW6</accession>
<organism>
    <name type="scientific">Brucella suis biovar 1 (strain 1330)</name>
    <dbReference type="NCBI Taxonomy" id="204722"/>
    <lineage>
        <taxon>Bacteria</taxon>
        <taxon>Pseudomonadati</taxon>
        <taxon>Pseudomonadota</taxon>
        <taxon>Alphaproteobacteria</taxon>
        <taxon>Hyphomicrobiales</taxon>
        <taxon>Brucellaceae</taxon>
        <taxon>Brucella/Ochrobactrum group</taxon>
        <taxon>Brucella</taxon>
    </lineage>
</organism>